<comment type="subcellular location">
    <subcellularLocation>
        <location evidence="2">Cell membrane</location>
        <topology evidence="2">Multi-pass membrane protein</topology>
    </subcellularLocation>
</comment>
<comment type="similarity">
    <text evidence="2">Belongs to the amino acid-polyamine-organocation (APC) superfamily.</text>
</comment>
<accession>O34618</accession>
<accession>Q795P5</accession>
<evidence type="ECO:0000255" key="1"/>
<evidence type="ECO:0000305" key="2"/>
<proteinExistence type="inferred from homology"/>
<gene>
    <name type="primary">ytnA</name>
    <name type="ordered locus">BSU30530</name>
</gene>
<protein>
    <recommendedName>
        <fullName>Uncharacterized amino acid permease YtnA</fullName>
    </recommendedName>
</protein>
<name>YTNA_BACSU</name>
<reference key="1">
    <citation type="journal article" date="1997" name="Microbiology">
        <title>Sequencing and functional annotation of the Bacillus subtilis genes in the 200 kb rrnB-dnaB region.</title>
        <authorList>
            <person name="Lapidus A."/>
            <person name="Galleron N."/>
            <person name="Sorokin A."/>
            <person name="Ehrlich S.D."/>
        </authorList>
    </citation>
    <scope>NUCLEOTIDE SEQUENCE [GENOMIC DNA]</scope>
    <source>
        <strain>168</strain>
    </source>
</reference>
<reference key="2">
    <citation type="journal article" date="1997" name="Nature">
        <title>The complete genome sequence of the Gram-positive bacterium Bacillus subtilis.</title>
        <authorList>
            <person name="Kunst F."/>
            <person name="Ogasawara N."/>
            <person name="Moszer I."/>
            <person name="Albertini A.M."/>
            <person name="Alloni G."/>
            <person name="Azevedo V."/>
            <person name="Bertero M.G."/>
            <person name="Bessieres P."/>
            <person name="Bolotin A."/>
            <person name="Borchert S."/>
            <person name="Borriss R."/>
            <person name="Boursier L."/>
            <person name="Brans A."/>
            <person name="Braun M."/>
            <person name="Brignell S.C."/>
            <person name="Bron S."/>
            <person name="Brouillet S."/>
            <person name="Bruschi C.V."/>
            <person name="Caldwell B."/>
            <person name="Capuano V."/>
            <person name="Carter N.M."/>
            <person name="Choi S.-K."/>
            <person name="Codani J.-J."/>
            <person name="Connerton I.F."/>
            <person name="Cummings N.J."/>
            <person name="Daniel R.A."/>
            <person name="Denizot F."/>
            <person name="Devine K.M."/>
            <person name="Duesterhoeft A."/>
            <person name="Ehrlich S.D."/>
            <person name="Emmerson P.T."/>
            <person name="Entian K.-D."/>
            <person name="Errington J."/>
            <person name="Fabret C."/>
            <person name="Ferrari E."/>
            <person name="Foulger D."/>
            <person name="Fritz C."/>
            <person name="Fujita M."/>
            <person name="Fujita Y."/>
            <person name="Fuma S."/>
            <person name="Galizzi A."/>
            <person name="Galleron N."/>
            <person name="Ghim S.-Y."/>
            <person name="Glaser P."/>
            <person name="Goffeau A."/>
            <person name="Golightly E.J."/>
            <person name="Grandi G."/>
            <person name="Guiseppi G."/>
            <person name="Guy B.J."/>
            <person name="Haga K."/>
            <person name="Haiech J."/>
            <person name="Harwood C.R."/>
            <person name="Henaut A."/>
            <person name="Hilbert H."/>
            <person name="Holsappel S."/>
            <person name="Hosono S."/>
            <person name="Hullo M.-F."/>
            <person name="Itaya M."/>
            <person name="Jones L.-M."/>
            <person name="Joris B."/>
            <person name="Karamata D."/>
            <person name="Kasahara Y."/>
            <person name="Klaerr-Blanchard M."/>
            <person name="Klein C."/>
            <person name="Kobayashi Y."/>
            <person name="Koetter P."/>
            <person name="Koningstein G."/>
            <person name="Krogh S."/>
            <person name="Kumano M."/>
            <person name="Kurita K."/>
            <person name="Lapidus A."/>
            <person name="Lardinois S."/>
            <person name="Lauber J."/>
            <person name="Lazarevic V."/>
            <person name="Lee S.-M."/>
            <person name="Levine A."/>
            <person name="Liu H."/>
            <person name="Masuda S."/>
            <person name="Mauel C."/>
            <person name="Medigue C."/>
            <person name="Medina N."/>
            <person name="Mellado R.P."/>
            <person name="Mizuno M."/>
            <person name="Moestl D."/>
            <person name="Nakai S."/>
            <person name="Noback M."/>
            <person name="Noone D."/>
            <person name="O'Reilly M."/>
            <person name="Ogawa K."/>
            <person name="Ogiwara A."/>
            <person name="Oudega B."/>
            <person name="Park S.-H."/>
            <person name="Parro V."/>
            <person name="Pohl T.M."/>
            <person name="Portetelle D."/>
            <person name="Porwollik S."/>
            <person name="Prescott A.M."/>
            <person name="Presecan E."/>
            <person name="Pujic P."/>
            <person name="Purnelle B."/>
            <person name="Rapoport G."/>
            <person name="Rey M."/>
            <person name="Reynolds S."/>
            <person name="Rieger M."/>
            <person name="Rivolta C."/>
            <person name="Rocha E."/>
            <person name="Roche B."/>
            <person name="Rose M."/>
            <person name="Sadaie Y."/>
            <person name="Sato T."/>
            <person name="Scanlan E."/>
            <person name="Schleich S."/>
            <person name="Schroeter R."/>
            <person name="Scoffone F."/>
            <person name="Sekiguchi J."/>
            <person name="Sekowska A."/>
            <person name="Seror S.J."/>
            <person name="Serror P."/>
            <person name="Shin B.-S."/>
            <person name="Soldo B."/>
            <person name="Sorokin A."/>
            <person name="Tacconi E."/>
            <person name="Takagi T."/>
            <person name="Takahashi H."/>
            <person name="Takemaru K."/>
            <person name="Takeuchi M."/>
            <person name="Tamakoshi A."/>
            <person name="Tanaka T."/>
            <person name="Terpstra P."/>
            <person name="Tognoni A."/>
            <person name="Tosato V."/>
            <person name="Uchiyama S."/>
            <person name="Vandenbol M."/>
            <person name="Vannier F."/>
            <person name="Vassarotti A."/>
            <person name="Viari A."/>
            <person name="Wambutt R."/>
            <person name="Wedler E."/>
            <person name="Wedler H."/>
            <person name="Weitzenegger T."/>
            <person name="Winters P."/>
            <person name="Wipat A."/>
            <person name="Yamamoto H."/>
            <person name="Yamane K."/>
            <person name="Yasumoto K."/>
            <person name="Yata K."/>
            <person name="Yoshida K."/>
            <person name="Yoshikawa H.-F."/>
            <person name="Zumstein E."/>
            <person name="Yoshikawa H."/>
            <person name="Danchin A."/>
        </authorList>
    </citation>
    <scope>NUCLEOTIDE SEQUENCE [LARGE SCALE GENOMIC DNA]</scope>
    <source>
        <strain>168</strain>
    </source>
</reference>
<sequence>MQKQKQELHRGLEERHISLMSLGAAIGVGLFLGSASAIQLAGPGILVAYAASGLVMFFIMRALGEMAIQKPVAGSFSRYARDYLGPLAGYLTGWNYWFLWVVTCMAEITAVGIYMGFWFPDVPNWIWALSALVIMTGVNFLAVKAYGELEFWFALIKIVAILSMIAVGLLMIIAGVGNGGIATGISNLWNNGGFFPHGLKGVLLSLQMVMFAYLGIEMIGVTAGEVKNPQKSLAKAIDTVFWRILIFYVGALFVIMSIYPWQEIGSQGSPFVLTFQKVGIPSAAGIINFVVLTAALSSCNSGIFSTGRMLFNLAEQKEAPQAYGQLTKGGIPGKAVLASAGALLVGVLLNYVVPAKVFTWVTSIATFGAIWTWAIILLSQIKYRKSLKPEEKKQLKYKMPLFPFTSYVSLAFLAFVVILMAYSPDTRVAVIIGPIWFLILLAVYYGKGFHKKNAAAASERNIS</sequence>
<feature type="chain" id="PRO_0000376830" description="Uncharacterized amino acid permease YtnA">
    <location>
        <begin position="1"/>
        <end position="463"/>
    </location>
</feature>
<feature type="transmembrane region" description="Helical" evidence="1">
    <location>
        <begin position="17"/>
        <end position="37"/>
    </location>
</feature>
<feature type="transmembrane region" description="Helical" evidence="1">
    <location>
        <begin position="40"/>
        <end position="60"/>
    </location>
</feature>
<feature type="transmembrane region" description="Helical" evidence="1">
    <location>
        <begin position="97"/>
        <end position="117"/>
    </location>
</feature>
<feature type="transmembrane region" description="Helical" evidence="1">
    <location>
        <begin position="122"/>
        <end position="142"/>
    </location>
</feature>
<feature type="transmembrane region" description="Helical" evidence="1">
    <location>
        <begin position="153"/>
        <end position="173"/>
    </location>
</feature>
<feature type="transmembrane region" description="Helical" evidence="1">
    <location>
        <begin position="201"/>
        <end position="221"/>
    </location>
</feature>
<feature type="transmembrane region" description="Helical" evidence="1">
    <location>
        <begin position="244"/>
        <end position="264"/>
    </location>
</feature>
<feature type="transmembrane region" description="Helical" evidence="1">
    <location>
        <begin position="278"/>
        <end position="298"/>
    </location>
</feature>
<feature type="transmembrane region" description="Helical" evidence="1">
    <location>
        <begin position="335"/>
        <end position="355"/>
    </location>
</feature>
<feature type="transmembrane region" description="Helical" evidence="1">
    <location>
        <begin position="357"/>
        <end position="377"/>
    </location>
</feature>
<feature type="transmembrane region" description="Helical" evidence="1">
    <location>
        <begin position="401"/>
        <end position="421"/>
    </location>
</feature>
<feature type="transmembrane region" description="Helical" evidence="1">
    <location>
        <begin position="429"/>
        <end position="449"/>
    </location>
</feature>
<dbReference type="EMBL" id="AF008220">
    <property type="protein sequence ID" value="AAC00244.1"/>
    <property type="molecule type" value="Genomic_DNA"/>
</dbReference>
<dbReference type="EMBL" id="AL009126">
    <property type="protein sequence ID" value="CAB15031.1"/>
    <property type="molecule type" value="Genomic_DNA"/>
</dbReference>
<dbReference type="PIR" id="C69997">
    <property type="entry name" value="C69997"/>
</dbReference>
<dbReference type="RefSeq" id="NP_390931.1">
    <property type="nucleotide sequence ID" value="NC_000964.3"/>
</dbReference>
<dbReference type="SMR" id="O34618"/>
<dbReference type="FunCoup" id="O34618">
    <property type="interactions" value="23"/>
</dbReference>
<dbReference type="STRING" id="224308.BSU30530"/>
<dbReference type="PaxDb" id="224308-BSU30530"/>
<dbReference type="EnsemblBacteria" id="CAB15031">
    <property type="protein sequence ID" value="CAB15031"/>
    <property type="gene ID" value="BSU_30530"/>
</dbReference>
<dbReference type="GeneID" id="938118"/>
<dbReference type="KEGG" id="bsu:BSU30530"/>
<dbReference type="PATRIC" id="fig|224308.179.peg.3311"/>
<dbReference type="eggNOG" id="COG1113">
    <property type="taxonomic scope" value="Bacteria"/>
</dbReference>
<dbReference type="InParanoid" id="O34618"/>
<dbReference type="OrthoDB" id="9780162at2"/>
<dbReference type="PhylomeDB" id="O34618"/>
<dbReference type="BioCyc" id="BSUB:BSU30530-MONOMER"/>
<dbReference type="Proteomes" id="UP000001570">
    <property type="component" value="Chromosome"/>
</dbReference>
<dbReference type="GO" id="GO:0016020">
    <property type="term" value="C:membrane"/>
    <property type="evidence" value="ECO:0000318"/>
    <property type="project" value="GO_Central"/>
</dbReference>
<dbReference type="GO" id="GO:0005886">
    <property type="term" value="C:plasma membrane"/>
    <property type="evidence" value="ECO:0007669"/>
    <property type="project" value="UniProtKB-SubCell"/>
</dbReference>
<dbReference type="GO" id="GO:0015171">
    <property type="term" value="F:amino acid transmembrane transporter activity"/>
    <property type="evidence" value="ECO:0000318"/>
    <property type="project" value="GO_Central"/>
</dbReference>
<dbReference type="GO" id="GO:0003333">
    <property type="term" value="P:amino acid transmembrane transport"/>
    <property type="evidence" value="ECO:0000318"/>
    <property type="project" value="GO_Central"/>
</dbReference>
<dbReference type="FunFam" id="1.20.1740.10:FF:000001">
    <property type="entry name" value="Amino acid permease"/>
    <property type="match status" value="1"/>
</dbReference>
<dbReference type="Gene3D" id="1.20.1740.10">
    <property type="entry name" value="Amino acid/polyamine transporter I"/>
    <property type="match status" value="1"/>
</dbReference>
<dbReference type="InterPro" id="IPR004841">
    <property type="entry name" value="AA-permease/SLC12A_dom"/>
</dbReference>
<dbReference type="InterPro" id="IPR004840">
    <property type="entry name" value="Amino_acid_permease_CS"/>
</dbReference>
<dbReference type="PANTHER" id="PTHR43495">
    <property type="entry name" value="GABA PERMEASE"/>
    <property type="match status" value="1"/>
</dbReference>
<dbReference type="PANTHER" id="PTHR43495:SF6">
    <property type="entry name" value="THREONINE_SERINE TRANSPORTER YBXG-RELATED"/>
    <property type="match status" value="1"/>
</dbReference>
<dbReference type="Pfam" id="PF00324">
    <property type="entry name" value="AA_permease"/>
    <property type="match status" value="1"/>
</dbReference>
<dbReference type="PIRSF" id="PIRSF006060">
    <property type="entry name" value="AA_transporter"/>
    <property type="match status" value="1"/>
</dbReference>
<dbReference type="PROSITE" id="PS00218">
    <property type="entry name" value="AMINO_ACID_PERMEASE_1"/>
    <property type="match status" value="1"/>
</dbReference>
<keyword id="KW-0029">Amino-acid transport</keyword>
<keyword id="KW-1003">Cell membrane</keyword>
<keyword id="KW-0472">Membrane</keyword>
<keyword id="KW-1185">Reference proteome</keyword>
<keyword id="KW-0812">Transmembrane</keyword>
<keyword id="KW-1133">Transmembrane helix</keyword>
<keyword id="KW-0813">Transport</keyword>
<organism>
    <name type="scientific">Bacillus subtilis (strain 168)</name>
    <dbReference type="NCBI Taxonomy" id="224308"/>
    <lineage>
        <taxon>Bacteria</taxon>
        <taxon>Bacillati</taxon>
        <taxon>Bacillota</taxon>
        <taxon>Bacilli</taxon>
        <taxon>Bacillales</taxon>
        <taxon>Bacillaceae</taxon>
        <taxon>Bacillus</taxon>
    </lineage>
</organism>